<reference key="1">
    <citation type="submission" date="2008-06" db="EMBL/GenBank/DDBJ databases">
        <title>Complete sequence of Pelodictyon phaeoclathratiforme BU-1.</title>
        <authorList>
            <consortium name="US DOE Joint Genome Institute"/>
            <person name="Lucas S."/>
            <person name="Copeland A."/>
            <person name="Lapidus A."/>
            <person name="Glavina del Rio T."/>
            <person name="Dalin E."/>
            <person name="Tice H."/>
            <person name="Bruce D."/>
            <person name="Goodwin L."/>
            <person name="Pitluck S."/>
            <person name="Schmutz J."/>
            <person name="Larimer F."/>
            <person name="Land M."/>
            <person name="Hauser L."/>
            <person name="Kyrpides N."/>
            <person name="Mikhailova N."/>
            <person name="Liu Z."/>
            <person name="Li T."/>
            <person name="Zhao F."/>
            <person name="Overmann J."/>
            <person name="Bryant D.A."/>
            <person name="Richardson P."/>
        </authorList>
    </citation>
    <scope>NUCLEOTIDE SEQUENCE [LARGE SCALE GENOMIC DNA]</scope>
    <source>
        <strain>DSM 5477 / BU-1</strain>
    </source>
</reference>
<accession>B4SEC4</accession>
<keyword id="KW-0963">Cytoplasm</keyword>
<keyword id="KW-1185">Reference proteome</keyword>
<feature type="chain" id="PRO_1000137180" description="Regulatory protein RecX">
    <location>
        <begin position="1"/>
        <end position="160"/>
    </location>
</feature>
<comment type="function">
    <text evidence="1">Modulates RecA activity.</text>
</comment>
<comment type="subcellular location">
    <subcellularLocation>
        <location evidence="1">Cytoplasm</location>
    </subcellularLocation>
</comment>
<comment type="similarity">
    <text evidence="1">Belongs to the RecX family.</text>
</comment>
<sequence>MTDNNAPGAMTFALKLLGLRSHSKDELKRKLLKKGYSAEGIEPVIEKLSRMGALDDHAFGMEVIRSRSRRKPSGRLKIVAELRKKGVAETIISELLKEYDSVALCHRAAEKKLASLREMSEADRKRKLEVFLSNRGFEWQEIQSALRLLVLPGADDDEPC</sequence>
<evidence type="ECO:0000255" key="1">
    <source>
        <dbReference type="HAMAP-Rule" id="MF_01114"/>
    </source>
</evidence>
<gene>
    <name evidence="1" type="primary">recX</name>
    <name type="ordered locus">Ppha_2350</name>
</gene>
<organism>
    <name type="scientific">Pelodictyon phaeoclathratiforme (strain DSM 5477 / BU-1)</name>
    <dbReference type="NCBI Taxonomy" id="324925"/>
    <lineage>
        <taxon>Bacteria</taxon>
        <taxon>Pseudomonadati</taxon>
        <taxon>Chlorobiota</taxon>
        <taxon>Chlorobiia</taxon>
        <taxon>Chlorobiales</taxon>
        <taxon>Chlorobiaceae</taxon>
        <taxon>Chlorobium/Pelodictyon group</taxon>
        <taxon>Pelodictyon</taxon>
    </lineage>
</organism>
<protein>
    <recommendedName>
        <fullName evidence="1">Regulatory protein RecX</fullName>
    </recommendedName>
</protein>
<name>RECX_PELPB</name>
<proteinExistence type="inferred from homology"/>
<dbReference type="EMBL" id="CP001110">
    <property type="protein sequence ID" value="ACF44543.1"/>
    <property type="molecule type" value="Genomic_DNA"/>
</dbReference>
<dbReference type="RefSeq" id="WP_012509017.1">
    <property type="nucleotide sequence ID" value="NC_011060.1"/>
</dbReference>
<dbReference type="SMR" id="B4SEC4"/>
<dbReference type="STRING" id="324925.Ppha_2350"/>
<dbReference type="KEGG" id="pph:Ppha_2350"/>
<dbReference type="eggNOG" id="COG2137">
    <property type="taxonomic scope" value="Bacteria"/>
</dbReference>
<dbReference type="HOGENOM" id="CLU_066607_3_3_10"/>
<dbReference type="OrthoDB" id="597927at2"/>
<dbReference type="Proteomes" id="UP000002724">
    <property type="component" value="Chromosome"/>
</dbReference>
<dbReference type="GO" id="GO:0005737">
    <property type="term" value="C:cytoplasm"/>
    <property type="evidence" value="ECO:0007669"/>
    <property type="project" value="UniProtKB-SubCell"/>
</dbReference>
<dbReference type="GO" id="GO:0006282">
    <property type="term" value="P:regulation of DNA repair"/>
    <property type="evidence" value="ECO:0007669"/>
    <property type="project" value="UniProtKB-UniRule"/>
</dbReference>
<dbReference type="Gene3D" id="1.10.10.10">
    <property type="entry name" value="Winged helix-like DNA-binding domain superfamily/Winged helix DNA-binding domain"/>
    <property type="match status" value="3"/>
</dbReference>
<dbReference type="HAMAP" id="MF_01114">
    <property type="entry name" value="RecX"/>
    <property type="match status" value="1"/>
</dbReference>
<dbReference type="InterPro" id="IPR053926">
    <property type="entry name" value="RecX_HTH_1st"/>
</dbReference>
<dbReference type="InterPro" id="IPR053924">
    <property type="entry name" value="RecX_HTH_2nd"/>
</dbReference>
<dbReference type="InterPro" id="IPR053925">
    <property type="entry name" value="RecX_HTH_3rd"/>
</dbReference>
<dbReference type="InterPro" id="IPR003783">
    <property type="entry name" value="Regulatory_RecX"/>
</dbReference>
<dbReference type="InterPro" id="IPR036388">
    <property type="entry name" value="WH-like_DNA-bd_sf"/>
</dbReference>
<dbReference type="NCBIfam" id="NF001063">
    <property type="entry name" value="PRK00117.5-3"/>
    <property type="match status" value="1"/>
</dbReference>
<dbReference type="PANTHER" id="PTHR33602">
    <property type="entry name" value="REGULATORY PROTEIN RECX FAMILY PROTEIN"/>
    <property type="match status" value="1"/>
</dbReference>
<dbReference type="PANTHER" id="PTHR33602:SF1">
    <property type="entry name" value="REGULATORY PROTEIN RECX FAMILY PROTEIN"/>
    <property type="match status" value="1"/>
</dbReference>
<dbReference type="Pfam" id="PF21982">
    <property type="entry name" value="RecX_HTH1"/>
    <property type="match status" value="1"/>
</dbReference>
<dbReference type="Pfam" id="PF02631">
    <property type="entry name" value="RecX_HTH2"/>
    <property type="match status" value="1"/>
</dbReference>
<dbReference type="Pfam" id="PF21981">
    <property type="entry name" value="RecX_HTH3"/>
    <property type="match status" value="1"/>
</dbReference>